<name>RL30_BORPA</name>
<reference key="1">
    <citation type="journal article" date="2003" name="Nat. Genet.">
        <title>Comparative analysis of the genome sequences of Bordetella pertussis, Bordetella parapertussis and Bordetella bronchiseptica.</title>
        <authorList>
            <person name="Parkhill J."/>
            <person name="Sebaihia M."/>
            <person name="Preston A."/>
            <person name="Murphy L.D."/>
            <person name="Thomson N.R."/>
            <person name="Harris D.E."/>
            <person name="Holden M.T.G."/>
            <person name="Churcher C.M."/>
            <person name="Bentley S.D."/>
            <person name="Mungall K.L."/>
            <person name="Cerdeno-Tarraga A.-M."/>
            <person name="Temple L."/>
            <person name="James K.D."/>
            <person name="Harris B."/>
            <person name="Quail M.A."/>
            <person name="Achtman M."/>
            <person name="Atkin R."/>
            <person name="Baker S."/>
            <person name="Basham D."/>
            <person name="Bason N."/>
            <person name="Cherevach I."/>
            <person name="Chillingworth T."/>
            <person name="Collins M."/>
            <person name="Cronin A."/>
            <person name="Davis P."/>
            <person name="Doggett J."/>
            <person name="Feltwell T."/>
            <person name="Goble A."/>
            <person name="Hamlin N."/>
            <person name="Hauser H."/>
            <person name="Holroyd S."/>
            <person name="Jagels K."/>
            <person name="Leather S."/>
            <person name="Moule S."/>
            <person name="Norberczak H."/>
            <person name="O'Neil S."/>
            <person name="Ormond D."/>
            <person name="Price C."/>
            <person name="Rabbinowitsch E."/>
            <person name="Rutter S."/>
            <person name="Sanders M."/>
            <person name="Saunders D."/>
            <person name="Seeger K."/>
            <person name="Sharp S."/>
            <person name="Simmonds M."/>
            <person name="Skelton J."/>
            <person name="Squares R."/>
            <person name="Squares S."/>
            <person name="Stevens K."/>
            <person name="Unwin L."/>
            <person name="Whitehead S."/>
            <person name="Barrell B.G."/>
            <person name="Maskell D.J."/>
        </authorList>
    </citation>
    <scope>NUCLEOTIDE SEQUENCE [LARGE SCALE GENOMIC DNA]</scope>
    <source>
        <strain>12822 / ATCC BAA-587 / NCTC 13253</strain>
    </source>
</reference>
<evidence type="ECO:0000255" key="1">
    <source>
        <dbReference type="HAMAP-Rule" id="MF_01371"/>
    </source>
</evidence>
<evidence type="ECO:0000305" key="2"/>
<protein>
    <recommendedName>
        <fullName evidence="1">Large ribosomal subunit protein uL30</fullName>
    </recommendedName>
    <alternativeName>
        <fullName evidence="2">50S ribosomal protein L30</fullName>
    </alternativeName>
</protein>
<proteinExistence type="inferred from homology"/>
<dbReference type="EMBL" id="BX640423">
    <property type="protein sequence ID" value="CAE39790.1"/>
    <property type="molecule type" value="Genomic_DNA"/>
</dbReference>
<dbReference type="RefSeq" id="WP_003806924.1">
    <property type="nucleotide sequence ID" value="NC_002928.3"/>
</dbReference>
<dbReference type="SMR" id="Q7W2D7"/>
<dbReference type="GeneID" id="93206279"/>
<dbReference type="KEGG" id="bpa:BPP0049"/>
<dbReference type="HOGENOM" id="CLU_131047_2_1_4"/>
<dbReference type="Proteomes" id="UP000001421">
    <property type="component" value="Chromosome"/>
</dbReference>
<dbReference type="GO" id="GO:0022625">
    <property type="term" value="C:cytosolic large ribosomal subunit"/>
    <property type="evidence" value="ECO:0007669"/>
    <property type="project" value="TreeGrafter"/>
</dbReference>
<dbReference type="GO" id="GO:0003735">
    <property type="term" value="F:structural constituent of ribosome"/>
    <property type="evidence" value="ECO:0007669"/>
    <property type="project" value="InterPro"/>
</dbReference>
<dbReference type="GO" id="GO:0006412">
    <property type="term" value="P:translation"/>
    <property type="evidence" value="ECO:0007669"/>
    <property type="project" value="UniProtKB-UniRule"/>
</dbReference>
<dbReference type="CDD" id="cd01658">
    <property type="entry name" value="Ribosomal_L30"/>
    <property type="match status" value="1"/>
</dbReference>
<dbReference type="FunFam" id="3.30.1390.20:FF:000001">
    <property type="entry name" value="50S ribosomal protein L30"/>
    <property type="match status" value="1"/>
</dbReference>
<dbReference type="Gene3D" id="3.30.1390.20">
    <property type="entry name" value="Ribosomal protein L30, ferredoxin-like fold domain"/>
    <property type="match status" value="1"/>
</dbReference>
<dbReference type="HAMAP" id="MF_01371_B">
    <property type="entry name" value="Ribosomal_uL30_B"/>
    <property type="match status" value="1"/>
</dbReference>
<dbReference type="InterPro" id="IPR036919">
    <property type="entry name" value="Ribo_uL30_ferredoxin-like_sf"/>
</dbReference>
<dbReference type="InterPro" id="IPR005996">
    <property type="entry name" value="Ribosomal_uL30_bac-type"/>
</dbReference>
<dbReference type="InterPro" id="IPR018038">
    <property type="entry name" value="Ribosomal_uL30_CS"/>
</dbReference>
<dbReference type="InterPro" id="IPR016082">
    <property type="entry name" value="Ribosomal_uL30_ferredoxin-like"/>
</dbReference>
<dbReference type="NCBIfam" id="TIGR01308">
    <property type="entry name" value="rpmD_bact"/>
    <property type="match status" value="1"/>
</dbReference>
<dbReference type="PANTHER" id="PTHR15892:SF2">
    <property type="entry name" value="LARGE RIBOSOMAL SUBUNIT PROTEIN UL30M"/>
    <property type="match status" value="1"/>
</dbReference>
<dbReference type="PANTHER" id="PTHR15892">
    <property type="entry name" value="MITOCHONDRIAL RIBOSOMAL PROTEIN L30"/>
    <property type="match status" value="1"/>
</dbReference>
<dbReference type="Pfam" id="PF00327">
    <property type="entry name" value="Ribosomal_L30"/>
    <property type="match status" value="1"/>
</dbReference>
<dbReference type="PIRSF" id="PIRSF002211">
    <property type="entry name" value="Ribosomal_L30_bac-type"/>
    <property type="match status" value="1"/>
</dbReference>
<dbReference type="SUPFAM" id="SSF55129">
    <property type="entry name" value="Ribosomal protein L30p/L7e"/>
    <property type="match status" value="1"/>
</dbReference>
<dbReference type="PROSITE" id="PS00634">
    <property type="entry name" value="RIBOSOMAL_L30"/>
    <property type="match status" value="1"/>
</dbReference>
<gene>
    <name evidence="1" type="primary">rpmD</name>
    <name type="ordered locus">BPP0049</name>
</gene>
<feature type="chain" id="PRO_0000273751" description="Large ribosomal subunit protein uL30">
    <location>
        <begin position="1"/>
        <end position="61"/>
    </location>
</feature>
<accession>Q7W2D7</accession>
<keyword id="KW-0687">Ribonucleoprotein</keyword>
<keyword id="KW-0689">Ribosomal protein</keyword>
<sequence length="61" mass="6786">MAQKQIKVTLVRSVIGTKQSHRDTIRGLGLRRINSSRVLVDTPEVRGMIHKVGYLVSVSEA</sequence>
<comment type="subunit">
    <text evidence="1">Part of the 50S ribosomal subunit.</text>
</comment>
<comment type="similarity">
    <text evidence="1">Belongs to the universal ribosomal protein uL30 family.</text>
</comment>
<organism>
    <name type="scientific">Bordetella parapertussis (strain 12822 / ATCC BAA-587 / NCTC 13253)</name>
    <dbReference type="NCBI Taxonomy" id="257311"/>
    <lineage>
        <taxon>Bacteria</taxon>
        <taxon>Pseudomonadati</taxon>
        <taxon>Pseudomonadota</taxon>
        <taxon>Betaproteobacteria</taxon>
        <taxon>Burkholderiales</taxon>
        <taxon>Alcaligenaceae</taxon>
        <taxon>Bordetella</taxon>
    </lineage>
</organism>